<proteinExistence type="evidence at transcript level"/>
<organism>
    <name type="scientific">Pan troglodytes</name>
    <name type="common">Chimpanzee</name>
    <dbReference type="NCBI Taxonomy" id="9598"/>
    <lineage>
        <taxon>Eukaryota</taxon>
        <taxon>Metazoa</taxon>
        <taxon>Chordata</taxon>
        <taxon>Craniata</taxon>
        <taxon>Vertebrata</taxon>
        <taxon>Euteleostomi</taxon>
        <taxon>Mammalia</taxon>
        <taxon>Eutheria</taxon>
        <taxon>Euarchontoglires</taxon>
        <taxon>Primates</taxon>
        <taxon>Haplorrhini</taxon>
        <taxon>Catarrhini</taxon>
        <taxon>Hominidae</taxon>
        <taxon>Pan</taxon>
    </lineage>
</organism>
<dbReference type="EMBL" id="AF169946">
    <property type="protein sequence ID" value="AAF43108.1"/>
    <property type="molecule type" value="mRNA"/>
</dbReference>
<dbReference type="SMR" id="Q9N1Q7"/>
<dbReference type="STRING" id="9598.ENSPTRP00000085783"/>
<dbReference type="PaxDb" id="9598-ENSPTRP00000022255"/>
<dbReference type="eggNOG" id="KOG2177">
    <property type="taxonomic scope" value="Eukaryota"/>
</dbReference>
<dbReference type="InParanoid" id="Q9N1Q7"/>
<dbReference type="Proteomes" id="UP000002277">
    <property type="component" value="Unplaced"/>
</dbReference>
<dbReference type="GO" id="GO:0005737">
    <property type="term" value="C:cytoplasm"/>
    <property type="evidence" value="ECO:0000250"/>
    <property type="project" value="UniProtKB"/>
</dbReference>
<dbReference type="GO" id="GO:0016605">
    <property type="term" value="C:PML body"/>
    <property type="evidence" value="ECO:0000250"/>
    <property type="project" value="UniProtKB"/>
</dbReference>
<dbReference type="GO" id="GO:0008301">
    <property type="term" value="F:DNA binding, bending"/>
    <property type="evidence" value="ECO:0000318"/>
    <property type="project" value="GO_Central"/>
</dbReference>
<dbReference type="GO" id="GO:0010596">
    <property type="term" value="P:negative regulation of endothelial cell migration"/>
    <property type="evidence" value="ECO:0000250"/>
    <property type="project" value="UniProtKB"/>
</dbReference>
<dbReference type="GO" id="GO:0046826">
    <property type="term" value="P:negative regulation of protein export from nucleus"/>
    <property type="evidence" value="ECO:0000250"/>
    <property type="project" value="UniProtKB"/>
</dbReference>
<dbReference type="GO" id="GO:0045765">
    <property type="term" value="P:regulation of angiogenesis"/>
    <property type="evidence" value="ECO:0000250"/>
    <property type="project" value="UniProtKB"/>
</dbReference>
<dbReference type="GO" id="GO:1902041">
    <property type="term" value="P:regulation of extrinsic apoptotic signaling pathway via death domain receptors"/>
    <property type="evidence" value="ECO:0000250"/>
    <property type="project" value="UniProtKB"/>
</dbReference>
<dbReference type="GO" id="GO:1902044">
    <property type="term" value="P:regulation of Fas signaling pathway"/>
    <property type="evidence" value="ECO:0000250"/>
    <property type="project" value="UniProtKB"/>
</dbReference>
<dbReference type="GO" id="GO:0006357">
    <property type="term" value="P:regulation of transcription by RNA polymerase II"/>
    <property type="evidence" value="ECO:0000318"/>
    <property type="project" value="GO_Central"/>
</dbReference>
<dbReference type="GO" id="GO:0000723">
    <property type="term" value="P:telomere maintenance"/>
    <property type="evidence" value="ECO:0000250"/>
    <property type="project" value="UniProtKB"/>
</dbReference>
<dbReference type="CDD" id="cd21978">
    <property type="entry name" value="HMG-box_HMGB_rpt1"/>
    <property type="match status" value="1"/>
</dbReference>
<dbReference type="CDD" id="cd21979">
    <property type="entry name" value="HMG-box_HMGB_rpt2"/>
    <property type="match status" value="1"/>
</dbReference>
<dbReference type="FunFam" id="1.10.30.10:FF:000015">
    <property type="entry name" value="high mobility group protein B1"/>
    <property type="match status" value="1"/>
</dbReference>
<dbReference type="FunFam" id="1.10.30.10:FF:000050">
    <property type="entry name" value="Nuclear autoantigen Sp-100"/>
    <property type="match status" value="1"/>
</dbReference>
<dbReference type="FunFam" id="3.10.390.10:FF:000012">
    <property type="entry name" value="Nuclear autoantigen Sp-100"/>
    <property type="match status" value="1"/>
</dbReference>
<dbReference type="Gene3D" id="1.10.30.10">
    <property type="entry name" value="High mobility group box domain"/>
    <property type="match status" value="2"/>
</dbReference>
<dbReference type="Gene3D" id="3.10.390.10">
    <property type="entry name" value="SAND domain-like"/>
    <property type="match status" value="1"/>
</dbReference>
<dbReference type="InterPro" id="IPR009071">
    <property type="entry name" value="HMG_box_dom"/>
</dbReference>
<dbReference type="InterPro" id="IPR036910">
    <property type="entry name" value="HMG_box_dom_sf"/>
</dbReference>
<dbReference type="InterPro" id="IPR050342">
    <property type="entry name" value="HMGB"/>
</dbReference>
<dbReference type="InterPro" id="IPR010919">
    <property type="entry name" value="SAND-like_dom_sf"/>
</dbReference>
<dbReference type="InterPro" id="IPR000770">
    <property type="entry name" value="SAND_dom"/>
</dbReference>
<dbReference type="PANTHER" id="PTHR48112:SF18">
    <property type="match status" value="1"/>
</dbReference>
<dbReference type="PANTHER" id="PTHR48112">
    <property type="entry name" value="HIGH MOBILITY GROUP PROTEIN DSP1"/>
    <property type="match status" value="1"/>
</dbReference>
<dbReference type="Pfam" id="PF00505">
    <property type="entry name" value="HMG_box"/>
    <property type="match status" value="1"/>
</dbReference>
<dbReference type="Pfam" id="PF09011">
    <property type="entry name" value="HMG_box_2"/>
    <property type="match status" value="1"/>
</dbReference>
<dbReference type="Pfam" id="PF01342">
    <property type="entry name" value="SAND"/>
    <property type="match status" value="1"/>
</dbReference>
<dbReference type="PRINTS" id="PR00886">
    <property type="entry name" value="HIGHMOBLTY12"/>
</dbReference>
<dbReference type="SMART" id="SM00398">
    <property type="entry name" value="HMG"/>
    <property type="match status" value="2"/>
</dbReference>
<dbReference type="SUPFAM" id="SSF47095">
    <property type="entry name" value="HMG-box"/>
    <property type="match status" value="2"/>
</dbReference>
<dbReference type="SUPFAM" id="SSF63763">
    <property type="entry name" value="SAND domain-like"/>
    <property type="match status" value="1"/>
</dbReference>
<dbReference type="PROSITE" id="PS50118">
    <property type="entry name" value="HMG_BOX_2"/>
    <property type="match status" value="2"/>
</dbReference>
<dbReference type="PROSITE" id="PS50864">
    <property type="entry name" value="SAND"/>
    <property type="match status" value="1"/>
</dbReference>
<comment type="function">
    <text evidence="2">Together with PML, this tumor suppressor is a major constituent of the PML bodies, a subnuclear organelle involved in a large number of physiological processes including cell growth, differentiation and apoptosis. Functions as a transcriptional coactivator of ETS1 and ETS2. Under certain conditions, it may also act as a corepressor of ETS1 preventing its binding to DNA. Through the regulation of ETS1 it may play a role in angiogenesis, controlling endothelial cell motility and invasion. Through interaction with the MRN complex it may be involved in the regulation of telomeres lengthening. May also regulate TP53-mediated transcription and through CASP8AP2, regulate FAS-mediated apoptosis. May also play a role in infection by viruses through mechanisms that may involve chromatin and/or transcriptional regulation (By similarity).</text>
</comment>
<comment type="subunit">
    <text evidence="2">Homodimer. Interacts with members of the HP1 family of nonhistone chromosomal protein, such as CBX5 and CBX3 via the PxVxL motif. Interacts with ETS1; the interaction is direct and modulates ETS1 transcriptional activity. Interacts with the MRN complex which is composed of two heterodimers RAD50/MRE11 associated with a single NBN; recruits the complex to PML-related bodies. Interacts with HIPK2; positively regulates TP53-dependent transcription. Interacts with CASP8AP2; may negatively regulate CASP8AP2 export from the nucleus to the cytoplasm (By similarity).</text>
</comment>
<comment type="subcellular location">
    <subcellularLocation>
        <location evidence="2">Nucleus</location>
    </subcellularLocation>
    <subcellularLocation>
        <location evidence="2">Nucleus</location>
        <location evidence="2">PML body</location>
    </subcellularLocation>
    <subcellularLocation>
        <location evidence="2">Nucleus</location>
        <location evidence="2">Nuclear body</location>
    </subcellularLocation>
    <subcellularLocation>
        <location evidence="2">Cytoplasm</location>
    </subcellularLocation>
    <text evidence="2">Accumulates in the cytoplasm upon FAS activation.</text>
</comment>
<comment type="PTM">
    <text evidence="1">Phosphorylated.</text>
</comment>
<comment type="PTM">
    <text evidence="1">Sumoylated. Sumoylated with SUMO1. Sumoylation depends on a functional nuclear localization signal but is not necessary for nuclear import or nuclear body targeting. Sumoylation may stabilize the interaction with CBX5 (By similarity).</text>
</comment>
<reference key="1">
    <citation type="journal article" date="2000" name="Genomics">
        <title>Back to the roots of a new exon-the molecular archaeology of a SP100 splice variant.</title>
        <authorList>
            <person name="Rogalla P."/>
            <person name="Kazmierczak B."/>
            <person name="Flohr A.M."/>
            <person name="Hauke S."/>
            <person name="Bullerdiek J."/>
        </authorList>
    </citation>
    <scope>NUCLEOTIDE SEQUENCE [MRNA]</scope>
    <source>
        <tissue>Fibroblast</tissue>
    </source>
</reference>
<accession>Q9N1Q7</accession>
<keyword id="KW-0175">Coiled coil</keyword>
<keyword id="KW-0963">Cytoplasm</keyword>
<keyword id="KW-0238">DNA-binding</keyword>
<keyword id="KW-0539">Nucleus</keyword>
<keyword id="KW-0597">Phosphoprotein</keyword>
<keyword id="KW-1185">Reference proteome</keyword>
<keyword id="KW-0677">Repeat</keyword>
<keyword id="KW-0804">Transcription</keyword>
<keyword id="KW-0805">Transcription regulation</keyword>
<keyword id="KW-0832">Ubl conjugation</keyword>
<protein>
    <recommendedName>
        <fullName>Nuclear autoantigen Sp-100</fullName>
    </recommendedName>
    <alternativeName>
        <fullName>Nuclear dot-associated Sp100 protein</fullName>
    </alternativeName>
    <alternativeName>
        <fullName>Speckled 100 kDa</fullName>
    </alternativeName>
</protein>
<sequence length="215" mass="24766">EGDRGASKNWKLSIRCGGYTLKVLTENKFLPEPPSTRKKRILESHNNTLVDPCEEHKKKNPDASVKFSEFLKKRSEMWKTIFAKEKGKFEDMAKADKAHYEREMKTYIPPKGEKKKKFKDPNAPKRPPLAFFLFCSEYRPKIKGEHPGLSIDDVVKKLAGMWNNTAASDKQFYEKKAAKLKEKYKKDIAACRAKGKPNSATKRVVKAEKSKKKKE</sequence>
<evidence type="ECO:0000250" key="1"/>
<evidence type="ECO:0000250" key="2">
    <source>
        <dbReference type="UniProtKB" id="P23497"/>
    </source>
</evidence>
<evidence type="ECO:0000255" key="3"/>
<evidence type="ECO:0000255" key="4">
    <source>
        <dbReference type="PROSITE-ProRule" id="PRU00185"/>
    </source>
</evidence>
<evidence type="ECO:0000255" key="5">
    <source>
        <dbReference type="PROSITE-ProRule" id="PRU00267"/>
    </source>
</evidence>
<evidence type="ECO:0000256" key="6">
    <source>
        <dbReference type="SAM" id="MobiDB-lite"/>
    </source>
</evidence>
<feature type="chain" id="PRO_0000074100" description="Nuclear autoantigen Sp-100">
    <location>
        <begin position="1" status="less than"/>
        <end position="215" status="greater than"/>
    </location>
</feature>
<feature type="domain" description="SAND" evidence="4">
    <location>
        <begin position="1" status="less than"/>
        <end position="31"/>
    </location>
</feature>
<feature type="DNA-binding region" description="HMG box 1" evidence="5">
    <location>
        <begin position="32"/>
        <end position="108"/>
    </location>
</feature>
<feature type="DNA-binding region" description="HMG box 2" evidence="5">
    <location>
        <begin position="124"/>
        <end position="192"/>
    </location>
</feature>
<feature type="region of interest" description="Disordered" evidence="6">
    <location>
        <begin position="104"/>
        <end position="124"/>
    </location>
</feature>
<feature type="region of interest" description="Disordered" evidence="6">
    <location>
        <begin position="193"/>
        <end position="215"/>
    </location>
</feature>
<feature type="short sequence motif" description="Nuclear localization signal" evidence="3">
    <location>
        <begin position="72"/>
        <end position="89"/>
    </location>
</feature>
<feature type="non-terminal residue">
    <location>
        <position position="1"/>
    </location>
</feature>
<feature type="non-terminal residue">
    <location>
        <position position="215"/>
    </location>
</feature>
<gene>
    <name type="primary">SP100</name>
</gene>
<name>SP100_PANTR</name>